<protein>
    <recommendedName>
        <fullName>Undecaprenyl phosphate-alpha-4-amino-4-deoxy-L-arabinose arabinosyl transferase</fullName>
        <ecNumber>2.4.2.43</ecNumber>
    </recommendedName>
    <alternativeName>
        <fullName>4-amino-4-deoxy-L-arabinose lipid A transferase</fullName>
    </alternativeName>
    <alternativeName>
        <fullName>Lipid IV(A) 4-amino-4-deoxy-L-arabinosyltransferase</fullName>
    </alternativeName>
    <alternativeName>
        <fullName>Polymyxin resistance protein PmrK</fullName>
    </alternativeName>
    <alternativeName>
        <fullName>Undecaprenyl phosphate-alpha-L-Ara4N transferase</fullName>
    </alternativeName>
</protein>
<keyword id="KW-0997">Cell inner membrane</keyword>
<keyword id="KW-1003">Cell membrane</keyword>
<keyword id="KW-0328">Glycosyltransferase</keyword>
<keyword id="KW-0441">Lipid A biosynthesis</keyword>
<keyword id="KW-0444">Lipid biosynthesis</keyword>
<keyword id="KW-0443">Lipid metabolism</keyword>
<keyword id="KW-0448">Lipopolysaccharide biosynthesis</keyword>
<keyword id="KW-0472">Membrane</keyword>
<keyword id="KW-1185">Reference proteome</keyword>
<keyword id="KW-0808">Transferase</keyword>
<keyword id="KW-0812">Transmembrane</keyword>
<keyword id="KW-1133">Transmembrane helix</keyword>
<gene>
    <name type="primary">arnT</name>
    <name type="synonym">pmrK</name>
    <name type="synonym">yfbI</name>
    <name type="ordered locus">b2257</name>
    <name type="ordered locus">JW2251</name>
</gene>
<name>ARNT_ECOLI</name>
<comment type="function">
    <text evidence="3">Catalyzes the transfer of the L-Ara4N moiety of the glycolipid undecaprenyl phosphate-alpha-L-Ara4N to lipid A. The modified arabinose is attached to lipid A and is required for resistance to polymyxin and cationic antimicrobial peptides.</text>
</comment>
<comment type="catalytic activity">
    <reaction evidence="3">
        <text>4-amino-4-deoxy-alpha-L-arabinopyranosyl di-trans,octa-cis-undecaprenyl phosphate + lipid IVA = lipid IIA + di-trans,octa-cis-undecaprenyl phosphate.</text>
        <dbReference type="EC" id="2.4.2.43"/>
    </reaction>
</comment>
<comment type="pathway">
    <text>Lipopolysaccharide metabolism; 4-amino-4-deoxy-beta-L-arabinose-lipid A biosynthesis.</text>
</comment>
<comment type="subcellular location">
    <subcellularLocation>
        <location evidence="4">Cell inner membrane</location>
        <topology evidence="4">Multi-pass membrane protein</topology>
    </subcellularLocation>
</comment>
<comment type="induction">
    <text evidence="1">Induced by BasR.</text>
</comment>
<comment type="similarity">
    <text evidence="5">Belongs to the glycosyltransferase 83 family.</text>
</comment>
<accession>P76473</accession>
<accession>Q2MAN2</accession>
<dbReference type="EC" id="2.4.2.43"/>
<dbReference type="EMBL" id="U00096">
    <property type="protein sequence ID" value="AAC75317.1"/>
    <property type="molecule type" value="Genomic_DNA"/>
</dbReference>
<dbReference type="EMBL" id="AP009048">
    <property type="protein sequence ID" value="BAE76674.1"/>
    <property type="molecule type" value="Genomic_DNA"/>
</dbReference>
<dbReference type="PIR" id="G64996">
    <property type="entry name" value="G64996"/>
</dbReference>
<dbReference type="RefSeq" id="NP_416760.1">
    <property type="nucleotide sequence ID" value="NC_000913.3"/>
</dbReference>
<dbReference type="RefSeq" id="WP_000844057.1">
    <property type="nucleotide sequence ID" value="NZ_STEB01000008.1"/>
</dbReference>
<dbReference type="SMR" id="P76473"/>
<dbReference type="BioGRID" id="4260499">
    <property type="interactions" value="153"/>
</dbReference>
<dbReference type="FunCoup" id="P76473">
    <property type="interactions" value="270"/>
</dbReference>
<dbReference type="STRING" id="511145.b2257"/>
<dbReference type="CAZy" id="GT83">
    <property type="family name" value="Glycosyltransferase Family 83"/>
</dbReference>
<dbReference type="TCDB" id="9.B.142.2.9">
    <property type="family name" value="the integral membrane glycosyltransferase family 39 (gt39) family"/>
</dbReference>
<dbReference type="PaxDb" id="511145-b2257"/>
<dbReference type="EnsemblBacteria" id="AAC75317">
    <property type="protein sequence ID" value="AAC75317"/>
    <property type="gene ID" value="b2257"/>
</dbReference>
<dbReference type="GeneID" id="947297"/>
<dbReference type="KEGG" id="ecj:JW2251"/>
<dbReference type="KEGG" id="eco:b2257"/>
<dbReference type="KEGG" id="ecoc:C3026_12605"/>
<dbReference type="PATRIC" id="fig|511145.12.peg.2349"/>
<dbReference type="EchoBASE" id="EB3846"/>
<dbReference type="eggNOG" id="COG1807">
    <property type="taxonomic scope" value="Bacteria"/>
</dbReference>
<dbReference type="HOGENOM" id="CLU_019200_2_1_6"/>
<dbReference type="InParanoid" id="P76473"/>
<dbReference type="OMA" id="KGPLILM"/>
<dbReference type="OrthoDB" id="9775035at2"/>
<dbReference type="PhylomeDB" id="P76473"/>
<dbReference type="BioCyc" id="EcoCyc:G7170-MONOMER"/>
<dbReference type="BioCyc" id="MetaCyc:G7170-MONOMER"/>
<dbReference type="BRENDA" id="2.4.2.43">
    <property type="organism ID" value="2026"/>
</dbReference>
<dbReference type="UniPathway" id="UPA00037"/>
<dbReference type="PRO" id="PR:P76473"/>
<dbReference type="Proteomes" id="UP000000625">
    <property type="component" value="Chromosome"/>
</dbReference>
<dbReference type="GO" id="GO:0005886">
    <property type="term" value="C:plasma membrane"/>
    <property type="evidence" value="ECO:0000314"/>
    <property type="project" value="EcoCyc"/>
</dbReference>
<dbReference type="GO" id="GO:0103015">
    <property type="term" value="F:4-amino-4-deoxy-L-arabinose transferase activity"/>
    <property type="evidence" value="ECO:0007669"/>
    <property type="project" value="UniProtKB-EC"/>
</dbReference>
<dbReference type="GO" id="GO:0000030">
    <property type="term" value="F:mannosyltransferase activity"/>
    <property type="evidence" value="ECO:0007669"/>
    <property type="project" value="InterPro"/>
</dbReference>
<dbReference type="GO" id="GO:0016763">
    <property type="term" value="F:pentosyltransferase activity"/>
    <property type="evidence" value="ECO:0000315"/>
    <property type="project" value="EcoCyc"/>
</dbReference>
<dbReference type="GO" id="GO:0009245">
    <property type="term" value="P:lipid A biosynthetic process"/>
    <property type="evidence" value="ECO:0007669"/>
    <property type="project" value="UniProtKB-UniRule"/>
</dbReference>
<dbReference type="GO" id="GO:0009103">
    <property type="term" value="P:lipopolysaccharide biosynthetic process"/>
    <property type="evidence" value="ECO:0000315"/>
    <property type="project" value="EcoCyc"/>
</dbReference>
<dbReference type="GO" id="GO:0006493">
    <property type="term" value="P:protein O-linked glycosylation"/>
    <property type="evidence" value="ECO:0007669"/>
    <property type="project" value="InterPro"/>
</dbReference>
<dbReference type="GO" id="GO:0010041">
    <property type="term" value="P:response to iron(III) ion"/>
    <property type="evidence" value="ECO:0000316"/>
    <property type="project" value="EcoCyc"/>
</dbReference>
<dbReference type="HAMAP" id="MF_01165">
    <property type="entry name" value="ArnT_transfer"/>
    <property type="match status" value="1"/>
</dbReference>
<dbReference type="InterPro" id="IPR022839">
    <property type="entry name" value="ArnT_tfrase"/>
</dbReference>
<dbReference type="InterPro" id="IPR003342">
    <property type="entry name" value="Glyco_trans_39/83"/>
</dbReference>
<dbReference type="InterPro" id="IPR050297">
    <property type="entry name" value="LipidA_mod_glycosyltrf_83"/>
</dbReference>
<dbReference type="NCBIfam" id="NF009784">
    <property type="entry name" value="PRK13279.1"/>
    <property type="match status" value="1"/>
</dbReference>
<dbReference type="PANTHER" id="PTHR33908">
    <property type="entry name" value="MANNOSYLTRANSFERASE YKCB-RELATED"/>
    <property type="match status" value="1"/>
</dbReference>
<dbReference type="PANTHER" id="PTHR33908:SF3">
    <property type="entry name" value="UNDECAPRENYL PHOSPHATE-ALPHA-4-AMINO-4-DEOXY-L-ARABINOSE ARABINOSYL TRANSFERASE"/>
    <property type="match status" value="1"/>
</dbReference>
<dbReference type="Pfam" id="PF02366">
    <property type="entry name" value="PMT"/>
    <property type="match status" value="1"/>
</dbReference>
<organism>
    <name type="scientific">Escherichia coli (strain K12)</name>
    <dbReference type="NCBI Taxonomy" id="83333"/>
    <lineage>
        <taxon>Bacteria</taxon>
        <taxon>Pseudomonadati</taxon>
        <taxon>Pseudomonadota</taxon>
        <taxon>Gammaproteobacteria</taxon>
        <taxon>Enterobacterales</taxon>
        <taxon>Enterobacteriaceae</taxon>
        <taxon>Escherichia</taxon>
    </lineage>
</organism>
<sequence length="550" mass="62543">MKSVRYLIGLFAFIACYYLLPISTRLLWQPDETRYAEISREMLASGDWIVPHLLGLRYFEKPIAGYWINSIGQWLFGANNFGVRAGVIFATLLTAALVTWFTLRLWRDKRLALLATVIYLSLFIVYAIGTYAVLDPFIAFWLVAGMCSFWLAMQAQTWKGKSAGFLLLGITCGMGVMTKGFLALAVPVLSVLPWVATQKRWKDLFIYGWLAVISCVLTVLPWGLAIAQREPNFWHYFFWVEHIQRFALDDAQHRAPFWYYVPVIIAGSLPWLGLLPGALYTGWKNRKHSATVYLLSWTIMPLLFFSVAKGKLPTYILSCFASLAMLMAHYALLAAKNNPLALRINGWINIAFGVTGIIATFVVSPWGPMNTPVWQTFESYKVFCAWSIFSLWAFFGWYTLTNVEKTWPFAALCPLGLALLVGFSIPDRVMEGKHPQFFVEMTQESLQPSRYILTDSVGVAAGLAWSLQRDDIIMYRQTGELKYGLNYPDAKGRFVSGDEFANWLNQHRQEGIITLVLSVDRDEDINSLAIPPADAIDRQERLVLIQYRPK</sequence>
<feature type="chain" id="PRO_0000121504" description="Undecaprenyl phosphate-alpha-4-amino-4-deoxy-L-arabinose arabinosyl transferase">
    <location>
        <begin position="1"/>
        <end position="550"/>
    </location>
</feature>
<feature type="transmembrane region" description="Helical" evidence="2">
    <location>
        <begin position="7"/>
        <end position="27"/>
    </location>
</feature>
<feature type="transmembrane region" description="Helical" evidence="2">
    <location>
        <begin position="81"/>
        <end position="101"/>
    </location>
</feature>
<feature type="transmembrane region" description="Helical" evidence="2">
    <location>
        <begin position="110"/>
        <end position="131"/>
    </location>
</feature>
<feature type="transmembrane region" description="Helical" evidence="2">
    <location>
        <begin position="137"/>
        <end position="154"/>
    </location>
</feature>
<feature type="transmembrane region" description="Helical" evidence="2">
    <location>
        <begin position="165"/>
        <end position="185"/>
    </location>
</feature>
<feature type="transmembrane region" description="Helical" evidence="2">
    <location>
        <begin position="204"/>
        <end position="224"/>
    </location>
</feature>
<feature type="transmembrane region" description="Helical" evidence="2">
    <location>
        <begin position="255"/>
        <end position="275"/>
    </location>
</feature>
<feature type="transmembrane region" description="Helical" evidence="2">
    <location>
        <begin position="288"/>
        <end position="308"/>
    </location>
</feature>
<feature type="transmembrane region" description="Helical" evidence="2">
    <location>
        <begin position="315"/>
        <end position="335"/>
    </location>
</feature>
<feature type="transmembrane region" description="Helical" evidence="2">
    <location>
        <begin position="346"/>
        <end position="366"/>
    </location>
</feature>
<feature type="transmembrane region" description="Helical" evidence="2">
    <location>
        <begin position="383"/>
        <end position="403"/>
    </location>
</feature>
<feature type="transmembrane region" description="Helical" evidence="2">
    <location>
        <begin position="406"/>
        <end position="426"/>
    </location>
</feature>
<proteinExistence type="evidence at protein level"/>
<evidence type="ECO:0000250" key="1"/>
<evidence type="ECO:0000255" key="2"/>
<evidence type="ECO:0000269" key="3">
    <source>
    </source>
</evidence>
<evidence type="ECO:0000269" key="4">
    <source>
    </source>
</evidence>
<evidence type="ECO:0000305" key="5"/>
<reference key="1">
    <citation type="journal article" date="1997" name="Science">
        <title>The complete genome sequence of Escherichia coli K-12.</title>
        <authorList>
            <person name="Blattner F.R."/>
            <person name="Plunkett G. III"/>
            <person name="Bloch C.A."/>
            <person name="Perna N.T."/>
            <person name="Burland V."/>
            <person name="Riley M."/>
            <person name="Collado-Vides J."/>
            <person name="Glasner J.D."/>
            <person name="Rode C.K."/>
            <person name="Mayhew G.F."/>
            <person name="Gregor J."/>
            <person name="Davis N.W."/>
            <person name="Kirkpatrick H.A."/>
            <person name="Goeden M.A."/>
            <person name="Rose D.J."/>
            <person name="Mau B."/>
            <person name="Shao Y."/>
        </authorList>
    </citation>
    <scope>NUCLEOTIDE SEQUENCE [LARGE SCALE GENOMIC DNA]</scope>
    <source>
        <strain>K12 / MG1655 / ATCC 47076</strain>
    </source>
</reference>
<reference key="2">
    <citation type="journal article" date="2006" name="Mol. Syst. Biol.">
        <title>Highly accurate genome sequences of Escherichia coli K-12 strains MG1655 and W3110.</title>
        <authorList>
            <person name="Hayashi K."/>
            <person name="Morooka N."/>
            <person name="Yamamoto Y."/>
            <person name="Fujita K."/>
            <person name="Isono K."/>
            <person name="Choi S."/>
            <person name="Ohtsubo E."/>
            <person name="Baba T."/>
            <person name="Wanner B.L."/>
            <person name="Mori H."/>
            <person name="Horiuchi T."/>
        </authorList>
    </citation>
    <scope>NUCLEOTIDE SEQUENCE [LARGE SCALE GENOMIC DNA]</scope>
    <source>
        <strain>K12 / W3110 / ATCC 27325 / DSM 5911</strain>
    </source>
</reference>
<reference key="3">
    <citation type="journal article" date="2001" name="J. Biol. Chem.">
        <title>An inner membrane enzyme in Salmonella and Escherichia coli that transfers 4-amino-4-deoxy-L-arabinose to lipid A: induction on polymyxin-resistant mutants and role of a novel lipid-linked donor.</title>
        <authorList>
            <person name="Trent M.S."/>
            <person name="Ribeiro A.A."/>
            <person name="Lin S."/>
            <person name="Cotter R.J."/>
            <person name="Raetz C.R.H."/>
        </authorList>
    </citation>
    <scope>CATALYTIC ACTIVITY</scope>
    <scope>FUNCTION</scope>
    <source>
        <strain>K12 / W3110 / ATCC 27325 / DSM 5911</strain>
    </source>
</reference>
<reference key="4">
    <citation type="journal article" date="2005" name="Science">
        <title>Global topology analysis of the Escherichia coli inner membrane proteome.</title>
        <authorList>
            <person name="Daley D.O."/>
            <person name="Rapp M."/>
            <person name="Granseth E."/>
            <person name="Melen K."/>
            <person name="Drew D."/>
            <person name="von Heijne G."/>
        </authorList>
    </citation>
    <scope>SUBCELLULAR LOCATION</scope>
</reference>